<organism>
    <name type="scientific">Escherichia coli O17:K52:H18 (strain UMN026 / ExPEC)</name>
    <dbReference type="NCBI Taxonomy" id="585056"/>
    <lineage>
        <taxon>Bacteria</taxon>
        <taxon>Pseudomonadati</taxon>
        <taxon>Pseudomonadota</taxon>
        <taxon>Gammaproteobacteria</taxon>
        <taxon>Enterobacterales</taxon>
        <taxon>Enterobacteriaceae</taxon>
        <taxon>Escherichia</taxon>
    </lineage>
</organism>
<evidence type="ECO:0000255" key="1">
    <source>
        <dbReference type="HAMAP-Rule" id="MF_01907"/>
    </source>
</evidence>
<gene>
    <name evidence="1" type="primary">thrL</name>
    <name type="ordered locus">ECUMN_5049</name>
</gene>
<feature type="peptide" id="PRO_1000188777" description="thr operon leader peptide">
    <location>
        <begin position="1"/>
        <end position="21"/>
    </location>
</feature>
<sequence length="21" mass="2138">MKRISTTITTTITITTGNGAG</sequence>
<reference key="1">
    <citation type="journal article" date="2009" name="PLoS Genet.">
        <title>Organised genome dynamics in the Escherichia coli species results in highly diverse adaptive paths.</title>
        <authorList>
            <person name="Touchon M."/>
            <person name="Hoede C."/>
            <person name="Tenaillon O."/>
            <person name="Barbe V."/>
            <person name="Baeriswyl S."/>
            <person name="Bidet P."/>
            <person name="Bingen E."/>
            <person name="Bonacorsi S."/>
            <person name="Bouchier C."/>
            <person name="Bouvet O."/>
            <person name="Calteau A."/>
            <person name="Chiapello H."/>
            <person name="Clermont O."/>
            <person name="Cruveiller S."/>
            <person name="Danchin A."/>
            <person name="Diard M."/>
            <person name="Dossat C."/>
            <person name="Karoui M.E."/>
            <person name="Frapy E."/>
            <person name="Garry L."/>
            <person name="Ghigo J.M."/>
            <person name="Gilles A.M."/>
            <person name="Johnson J."/>
            <person name="Le Bouguenec C."/>
            <person name="Lescat M."/>
            <person name="Mangenot S."/>
            <person name="Martinez-Jehanne V."/>
            <person name="Matic I."/>
            <person name="Nassif X."/>
            <person name="Oztas S."/>
            <person name="Petit M.A."/>
            <person name="Pichon C."/>
            <person name="Rouy Z."/>
            <person name="Ruf C.S."/>
            <person name="Schneider D."/>
            <person name="Tourret J."/>
            <person name="Vacherie B."/>
            <person name="Vallenet D."/>
            <person name="Medigue C."/>
            <person name="Rocha E.P.C."/>
            <person name="Denamur E."/>
        </authorList>
    </citation>
    <scope>NUCLEOTIDE SEQUENCE [LARGE SCALE GENOMIC DNA]</scope>
    <source>
        <strain>UMN026 / ExPEC</strain>
    </source>
</reference>
<proteinExistence type="inferred from homology"/>
<comment type="function">
    <text evidence="1">This protein is involved in control of the biosynthesis of threonine.</text>
</comment>
<comment type="similarity">
    <text evidence="1">Belongs to the thr operon leader peptide family.</text>
</comment>
<accession>B7NH81</accession>
<keyword id="KW-0028">Amino-acid biosynthesis</keyword>
<keyword id="KW-0428">Leader peptide</keyword>
<keyword id="KW-0791">Threonine biosynthesis</keyword>
<name>LPT_ECOLU</name>
<protein>
    <recommendedName>
        <fullName evidence="1">thr operon leader peptide</fullName>
    </recommendedName>
    <alternativeName>
        <fullName evidence="1">thr operon attenuator</fullName>
    </alternativeName>
</protein>
<dbReference type="EMBL" id="CU928163">
    <property type="protein sequence ID" value="CAV18352.1"/>
    <property type="molecule type" value="Genomic_DNA"/>
</dbReference>
<dbReference type="RefSeq" id="WP_001386572.1">
    <property type="nucleotide sequence ID" value="NC_011751.1"/>
</dbReference>
<dbReference type="RefSeq" id="YP_002410781.1">
    <property type="nucleotide sequence ID" value="NC_011751.1"/>
</dbReference>
<dbReference type="STRING" id="585056.ECUMN_5049"/>
<dbReference type="GeneID" id="93777441"/>
<dbReference type="KEGG" id="eum:ECUMN_5049"/>
<dbReference type="HOGENOM" id="CLU_221491_0_1_6"/>
<dbReference type="Proteomes" id="UP000007097">
    <property type="component" value="Chromosome"/>
</dbReference>
<dbReference type="GO" id="GO:0009088">
    <property type="term" value="P:threonine biosynthetic process"/>
    <property type="evidence" value="ECO:0007669"/>
    <property type="project" value="UniProtKB-UniRule"/>
</dbReference>
<dbReference type="GO" id="GO:0031556">
    <property type="term" value="P:transcriptional attenuation by ribosome"/>
    <property type="evidence" value="ECO:0007669"/>
    <property type="project" value="UniProtKB-UniRule"/>
</dbReference>
<dbReference type="HAMAP" id="MF_01907">
    <property type="entry name" value="Leader_Thr"/>
    <property type="match status" value="1"/>
</dbReference>
<dbReference type="InterPro" id="IPR011720">
    <property type="entry name" value="Thr_lead_pept"/>
</dbReference>
<dbReference type="NCBIfam" id="NF007329">
    <property type="entry name" value="PRK09816.1"/>
    <property type="match status" value="1"/>
</dbReference>
<dbReference type="NCBIfam" id="TIGR02077">
    <property type="entry name" value="thr_lead_pep"/>
    <property type="match status" value="1"/>
</dbReference>
<dbReference type="Pfam" id="PF08254">
    <property type="entry name" value="Leader_Thr"/>
    <property type="match status" value="1"/>
</dbReference>